<accession>B6I3X3</accession>
<feature type="chain" id="PRO_0000368475" description="ATP synthase subunit b">
    <location>
        <begin position="1"/>
        <end position="156"/>
    </location>
</feature>
<feature type="transmembrane region" description="Helical" evidence="1">
    <location>
        <begin position="11"/>
        <end position="31"/>
    </location>
</feature>
<evidence type="ECO:0000255" key="1">
    <source>
        <dbReference type="HAMAP-Rule" id="MF_01398"/>
    </source>
</evidence>
<organism>
    <name type="scientific">Escherichia coli (strain SE11)</name>
    <dbReference type="NCBI Taxonomy" id="409438"/>
    <lineage>
        <taxon>Bacteria</taxon>
        <taxon>Pseudomonadati</taxon>
        <taxon>Pseudomonadota</taxon>
        <taxon>Gammaproteobacteria</taxon>
        <taxon>Enterobacterales</taxon>
        <taxon>Enterobacteriaceae</taxon>
        <taxon>Escherichia</taxon>
    </lineage>
</organism>
<keyword id="KW-0066">ATP synthesis</keyword>
<keyword id="KW-0997">Cell inner membrane</keyword>
<keyword id="KW-1003">Cell membrane</keyword>
<keyword id="KW-0138">CF(0)</keyword>
<keyword id="KW-0375">Hydrogen ion transport</keyword>
<keyword id="KW-0406">Ion transport</keyword>
<keyword id="KW-0472">Membrane</keyword>
<keyword id="KW-0812">Transmembrane</keyword>
<keyword id="KW-1133">Transmembrane helix</keyword>
<keyword id="KW-0813">Transport</keyword>
<proteinExistence type="inferred from homology"/>
<protein>
    <recommendedName>
        <fullName evidence="1">ATP synthase subunit b</fullName>
    </recommendedName>
    <alternativeName>
        <fullName evidence="1">ATP synthase F(0) sector subunit b</fullName>
    </alternativeName>
    <alternativeName>
        <fullName evidence="1">ATPase subunit I</fullName>
    </alternativeName>
    <alternativeName>
        <fullName evidence="1">F-type ATPase subunit b</fullName>
        <shortName evidence="1">F-ATPase subunit b</shortName>
    </alternativeName>
</protein>
<sequence length="156" mass="17264">MNLNATILGQAIAFVLFVLFCMKYVWPPLMAAIEKRQKEIADGLASAERAHKDLDLAKASATDQLKKAKAEAQVIIEQANKRRSQILDEAKAEAEQERTKIVAQAQAEIEAERKRAREELRKQVAILAVAGAEKIIERSVDEAANSDIVDKLVAEL</sequence>
<dbReference type="EMBL" id="AP009240">
    <property type="protein sequence ID" value="BAG79550.1"/>
    <property type="molecule type" value="Genomic_DNA"/>
</dbReference>
<dbReference type="RefSeq" id="WP_001052219.1">
    <property type="nucleotide sequence ID" value="NC_011415.1"/>
</dbReference>
<dbReference type="SMR" id="B6I3X3"/>
<dbReference type="GeneID" id="93778231"/>
<dbReference type="KEGG" id="ecy:ECSE_4026"/>
<dbReference type="HOGENOM" id="CLU_079215_4_5_6"/>
<dbReference type="Proteomes" id="UP000008199">
    <property type="component" value="Chromosome"/>
</dbReference>
<dbReference type="GO" id="GO:0005886">
    <property type="term" value="C:plasma membrane"/>
    <property type="evidence" value="ECO:0007669"/>
    <property type="project" value="UniProtKB-SubCell"/>
</dbReference>
<dbReference type="GO" id="GO:0045259">
    <property type="term" value="C:proton-transporting ATP synthase complex"/>
    <property type="evidence" value="ECO:0007669"/>
    <property type="project" value="UniProtKB-KW"/>
</dbReference>
<dbReference type="GO" id="GO:0046933">
    <property type="term" value="F:proton-transporting ATP synthase activity, rotational mechanism"/>
    <property type="evidence" value="ECO:0007669"/>
    <property type="project" value="UniProtKB-UniRule"/>
</dbReference>
<dbReference type="GO" id="GO:0046961">
    <property type="term" value="F:proton-transporting ATPase activity, rotational mechanism"/>
    <property type="evidence" value="ECO:0007669"/>
    <property type="project" value="TreeGrafter"/>
</dbReference>
<dbReference type="CDD" id="cd06503">
    <property type="entry name" value="ATP-synt_Fo_b"/>
    <property type="match status" value="1"/>
</dbReference>
<dbReference type="FunFam" id="1.20.5.620:FF:000001">
    <property type="entry name" value="ATP synthase subunit b"/>
    <property type="match status" value="1"/>
</dbReference>
<dbReference type="Gene3D" id="1.20.5.620">
    <property type="entry name" value="F1F0 ATP synthase subunit B, membrane domain"/>
    <property type="match status" value="1"/>
</dbReference>
<dbReference type="HAMAP" id="MF_01398">
    <property type="entry name" value="ATP_synth_b_bprime"/>
    <property type="match status" value="1"/>
</dbReference>
<dbReference type="InterPro" id="IPR028987">
    <property type="entry name" value="ATP_synth_B-like_membr_sf"/>
</dbReference>
<dbReference type="InterPro" id="IPR002146">
    <property type="entry name" value="ATP_synth_b/b'su_bac/chlpt"/>
</dbReference>
<dbReference type="InterPro" id="IPR005864">
    <property type="entry name" value="ATP_synth_F0_bsu_bac"/>
</dbReference>
<dbReference type="InterPro" id="IPR050059">
    <property type="entry name" value="ATP_synthase_B_chain"/>
</dbReference>
<dbReference type="NCBIfam" id="TIGR01144">
    <property type="entry name" value="ATP_synt_b"/>
    <property type="match status" value="1"/>
</dbReference>
<dbReference type="NCBIfam" id="NF004411">
    <property type="entry name" value="PRK05759.1-2"/>
    <property type="match status" value="1"/>
</dbReference>
<dbReference type="NCBIfam" id="NF004413">
    <property type="entry name" value="PRK05759.1-4"/>
    <property type="match status" value="1"/>
</dbReference>
<dbReference type="PANTHER" id="PTHR33445:SF1">
    <property type="entry name" value="ATP SYNTHASE SUBUNIT B"/>
    <property type="match status" value="1"/>
</dbReference>
<dbReference type="PANTHER" id="PTHR33445">
    <property type="entry name" value="ATP SYNTHASE SUBUNIT B', CHLOROPLASTIC"/>
    <property type="match status" value="1"/>
</dbReference>
<dbReference type="Pfam" id="PF00430">
    <property type="entry name" value="ATP-synt_B"/>
    <property type="match status" value="1"/>
</dbReference>
<dbReference type="SUPFAM" id="SSF81573">
    <property type="entry name" value="F1F0 ATP synthase subunit B, membrane domain"/>
    <property type="match status" value="1"/>
</dbReference>
<gene>
    <name evidence="1" type="primary">atpF</name>
    <name type="ordered locus">ECSE_4026</name>
</gene>
<reference key="1">
    <citation type="journal article" date="2008" name="DNA Res.">
        <title>Complete genome sequence and comparative analysis of the wild-type commensal Escherichia coli strain SE11 isolated from a healthy adult.</title>
        <authorList>
            <person name="Oshima K."/>
            <person name="Toh H."/>
            <person name="Ogura Y."/>
            <person name="Sasamoto H."/>
            <person name="Morita H."/>
            <person name="Park S.-H."/>
            <person name="Ooka T."/>
            <person name="Iyoda S."/>
            <person name="Taylor T.D."/>
            <person name="Hayashi T."/>
            <person name="Itoh K."/>
            <person name="Hattori M."/>
        </authorList>
    </citation>
    <scope>NUCLEOTIDE SEQUENCE [LARGE SCALE GENOMIC DNA]</scope>
    <source>
        <strain>SE11</strain>
    </source>
</reference>
<name>ATPF_ECOSE</name>
<comment type="function">
    <text evidence="1">F(1)F(0) ATP synthase produces ATP from ADP in the presence of a proton or sodium gradient. F-type ATPases consist of two structural domains, F(1) containing the extramembraneous catalytic core and F(0) containing the membrane proton channel, linked together by a central stalk and a peripheral stalk. During catalysis, ATP synthesis in the catalytic domain of F(1) is coupled via a rotary mechanism of the central stalk subunits to proton translocation.</text>
</comment>
<comment type="function">
    <text evidence="1">Component of the F(0) channel, it forms part of the peripheral stalk, linking F(1) to F(0).</text>
</comment>
<comment type="subunit">
    <text evidence="1">F-type ATPases have 2 components, F(1) - the catalytic core - and F(0) - the membrane proton channel. F(1) has five subunits: alpha(3), beta(3), gamma(1), delta(1), epsilon(1). F(0) has three main subunits: a(1), b(2) and c(10-14). The alpha and beta chains form an alternating ring which encloses part of the gamma chain. F(1) is attached to F(0) by a central stalk formed by the gamma and epsilon chains, while a peripheral stalk is formed by the delta and b chains.</text>
</comment>
<comment type="subcellular location">
    <subcellularLocation>
        <location evidence="1">Cell inner membrane</location>
        <topology evidence="1">Single-pass membrane protein</topology>
    </subcellularLocation>
</comment>
<comment type="similarity">
    <text evidence="1">Belongs to the ATPase B chain family.</text>
</comment>